<evidence type="ECO:0000255" key="1">
    <source>
        <dbReference type="HAMAP-Rule" id="MF_00469"/>
    </source>
</evidence>
<evidence type="ECO:0000256" key="2">
    <source>
        <dbReference type="SAM" id="MobiDB-lite"/>
    </source>
</evidence>
<feature type="chain" id="PRO_1000081198" description="tRNA uridine(34) hydroxylase">
    <location>
        <begin position="1"/>
        <end position="326"/>
    </location>
</feature>
<feature type="domain" description="Rhodanese" evidence="1">
    <location>
        <begin position="123"/>
        <end position="217"/>
    </location>
</feature>
<feature type="region of interest" description="Disordered" evidence="2">
    <location>
        <begin position="304"/>
        <end position="326"/>
    </location>
</feature>
<feature type="active site" description="Cysteine persulfide intermediate" evidence="1">
    <location>
        <position position="177"/>
    </location>
</feature>
<accession>A8FWP4</accession>
<gene>
    <name evidence="1" type="primary">trhO</name>
    <name type="ordered locus">Ssed_2660</name>
</gene>
<dbReference type="EC" id="1.14.-.-" evidence="1"/>
<dbReference type="EMBL" id="CP000821">
    <property type="protein sequence ID" value="ABV37267.1"/>
    <property type="molecule type" value="Genomic_DNA"/>
</dbReference>
<dbReference type="RefSeq" id="WP_012142998.1">
    <property type="nucleotide sequence ID" value="NC_009831.1"/>
</dbReference>
<dbReference type="SMR" id="A8FWP4"/>
<dbReference type="STRING" id="425104.Ssed_2660"/>
<dbReference type="KEGG" id="sse:Ssed_2660"/>
<dbReference type="eggNOG" id="COG1054">
    <property type="taxonomic scope" value="Bacteria"/>
</dbReference>
<dbReference type="HOGENOM" id="CLU_038878_0_0_6"/>
<dbReference type="OrthoDB" id="9778326at2"/>
<dbReference type="Proteomes" id="UP000002015">
    <property type="component" value="Chromosome"/>
</dbReference>
<dbReference type="GO" id="GO:0016705">
    <property type="term" value="F:oxidoreductase activity, acting on paired donors, with incorporation or reduction of molecular oxygen"/>
    <property type="evidence" value="ECO:0007669"/>
    <property type="project" value="UniProtKB-UniRule"/>
</dbReference>
<dbReference type="GO" id="GO:0006400">
    <property type="term" value="P:tRNA modification"/>
    <property type="evidence" value="ECO:0007669"/>
    <property type="project" value="UniProtKB-UniRule"/>
</dbReference>
<dbReference type="CDD" id="cd01518">
    <property type="entry name" value="RHOD_YceA"/>
    <property type="match status" value="1"/>
</dbReference>
<dbReference type="Gene3D" id="3.30.70.100">
    <property type="match status" value="1"/>
</dbReference>
<dbReference type="Gene3D" id="3.40.250.10">
    <property type="entry name" value="Rhodanese-like domain"/>
    <property type="match status" value="1"/>
</dbReference>
<dbReference type="HAMAP" id="MF_00469">
    <property type="entry name" value="TrhO"/>
    <property type="match status" value="1"/>
</dbReference>
<dbReference type="InterPro" id="IPR001763">
    <property type="entry name" value="Rhodanese-like_dom"/>
</dbReference>
<dbReference type="InterPro" id="IPR036873">
    <property type="entry name" value="Rhodanese-like_dom_sf"/>
</dbReference>
<dbReference type="InterPro" id="IPR020936">
    <property type="entry name" value="TrhO"/>
</dbReference>
<dbReference type="InterPro" id="IPR040503">
    <property type="entry name" value="TRHO_N"/>
</dbReference>
<dbReference type="NCBIfam" id="NF001136">
    <property type="entry name" value="PRK00142.1-4"/>
    <property type="match status" value="1"/>
</dbReference>
<dbReference type="PANTHER" id="PTHR43268:SF3">
    <property type="entry name" value="RHODANESE-LIKE DOMAIN-CONTAINING PROTEIN 7-RELATED"/>
    <property type="match status" value="1"/>
</dbReference>
<dbReference type="PANTHER" id="PTHR43268">
    <property type="entry name" value="THIOSULFATE SULFURTRANSFERASE/RHODANESE-LIKE DOMAIN-CONTAINING PROTEIN 2"/>
    <property type="match status" value="1"/>
</dbReference>
<dbReference type="Pfam" id="PF00581">
    <property type="entry name" value="Rhodanese"/>
    <property type="match status" value="1"/>
</dbReference>
<dbReference type="Pfam" id="PF17773">
    <property type="entry name" value="UPF0176_N"/>
    <property type="match status" value="1"/>
</dbReference>
<dbReference type="SMART" id="SM00450">
    <property type="entry name" value="RHOD"/>
    <property type="match status" value="1"/>
</dbReference>
<dbReference type="SUPFAM" id="SSF52821">
    <property type="entry name" value="Rhodanese/Cell cycle control phosphatase"/>
    <property type="match status" value="1"/>
</dbReference>
<dbReference type="PROSITE" id="PS50206">
    <property type="entry name" value="RHODANESE_3"/>
    <property type="match status" value="1"/>
</dbReference>
<sequence>MSQVVVCALYKFVSLPHFESIQKPLLALMEESGVKGTLLLASEGINGTVAGSQAAIDSLLMWLYQQPGLDNIVHKRSFDEQMPFYRTKVKLKKEIVTMGVEGIDPLKVVGTYVKPRDWNKLISDPDVLLVDTRNEYEIQIGTFKNAVDPKTDTFREFPAYVKDNLDPAKHKKVAMFCTGGIRCEKSTAYLKEQGFDEVYHLEGGVLKYLEEVKQEESLWEGECFVFDNRVAVNHNLEKGQYDQCNACRMPITETEKASEAYVQGVSCPHCIDSTSDKQRRRFEERERQMLLAAKRGEAHIGSDVSQVILSRRTEKEDQRQAQNKKA</sequence>
<keyword id="KW-0560">Oxidoreductase</keyword>
<keyword id="KW-1185">Reference proteome</keyword>
<keyword id="KW-0819">tRNA processing</keyword>
<proteinExistence type="inferred from homology"/>
<organism>
    <name type="scientific">Shewanella sediminis (strain HAW-EB3)</name>
    <dbReference type="NCBI Taxonomy" id="425104"/>
    <lineage>
        <taxon>Bacteria</taxon>
        <taxon>Pseudomonadati</taxon>
        <taxon>Pseudomonadota</taxon>
        <taxon>Gammaproteobacteria</taxon>
        <taxon>Alteromonadales</taxon>
        <taxon>Shewanellaceae</taxon>
        <taxon>Shewanella</taxon>
    </lineage>
</organism>
<protein>
    <recommendedName>
        <fullName evidence="1">tRNA uridine(34) hydroxylase</fullName>
        <ecNumber evidence="1">1.14.-.-</ecNumber>
    </recommendedName>
    <alternativeName>
        <fullName evidence="1">tRNA hydroxylation protein O</fullName>
    </alternativeName>
</protein>
<comment type="function">
    <text evidence="1">Catalyzes oxygen-dependent 5-hydroxyuridine (ho5U) modification at position 34 in tRNAs.</text>
</comment>
<comment type="catalytic activity">
    <reaction evidence="1">
        <text>uridine(34) in tRNA + AH2 + O2 = 5-hydroxyuridine(34) in tRNA + A + H2O</text>
        <dbReference type="Rhea" id="RHEA:64224"/>
        <dbReference type="Rhea" id="RHEA-COMP:11727"/>
        <dbReference type="Rhea" id="RHEA-COMP:13381"/>
        <dbReference type="ChEBI" id="CHEBI:13193"/>
        <dbReference type="ChEBI" id="CHEBI:15377"/>
        <dbReference type="ChEBI" id="CHEBI:15379"/>
        <dbReference type="ChEBI" id="CHEBI:17499"/>
        <dbReference type="ChEBI" id="CHEBI:65315"/>
        <dbReference type="ChEBI" id="CHEBI:136877"/>
    </reaction>
</comment>
<comment type="similarity">
    <text evidence="1">Belongs to the TrhO family.</text>
</comment>
<name>TRHO_SHESH</name>
<reference key="1">
    <citation type="submission" date="2007-08" db="EMBL/GenBank/DDBJ databases">
        <title>Complete sequence of Shewanella sediminis HAW-EB3.</title>
        <authorList>
            <consortium name="US DOE Joint Genome Institute"/>
            <person name="Copeland A."/>
            <person name="Lucas S."/>
            <person name="Lapidus A."/>
            <person name="Barry K."/>
            <person name="Glavina del Rio T."/>
            <person name="Dalin E."/>
            <person name="Tice H."/>
            <person name="Pitluck S."/>
            <person name="Chertkov O."/>
            <person name="Brettin T."/>
            <person name="Bruce D."/>
            <person name="Detter J.C."/>
            <person name="Han C."/>
            <person name="Schmutz J."/>
            <person name="Larimer F."/>
            <person name="Land M."/>
            <person name="Hauser L."/>
            <person name="Kyrpides N."/>
            <person name="Kim E."/>
            <person name="Zhao J.-S."/>
            <person name="Richardson P."/>
        </authorList>
    </citation>
    <scope>NUCLEOTIDE SEQUENCE [LARGE SCALE GENOMIC DNA]</scope>
    <source>
        <strain>HAW-EB3</strain>
    </source>
</reference>